<organism>
    <name type="scientific">Methanocaldococcus jannaschii (strain ATCC 43067 / DSM 2661 / JAL-1 / JCM 10045 / NBRC 100440)</name>
    <name type="common">Methanococcus jannaschii</name>
    <dbReference type="NCBI Taxonomy" id="243232"/>
    <lineage>
        <taxon>Archaea</taxon>
        <taxon>Methanobacteriati</taxon>
        <taxon>Methanobacteriota</taxon>
        <taxon>Methanomada group</taxon>
        <taxon>Methanococci</taxon>
        <taxon>Methanococcales</taxon>
        <taxon>Methanocaldococcaceae</taxon>
        <taxon>Methanocaldococcus</taxon>
    </lineage>
</organism>
<protein>
    <recommendedName>
        <fullName evidence="1">RNA 2',3'-cyclic phosphodiesterase</fullName>
        <shortName evidence="1">RNA 2',3'-CPDase</shortName>
        <ecNumber evidence="1">3.1.4.58</ecNumber>
    </recommendedName>
</protein>
<gene>
    <name type="ordered locus">MJ1568</name>
</gene>
<proteinExistence type="inferred from homology"/>
<evidence type="ECO:0000255" key="1">
    <source>
        <dbReference type="HAMAP-Rule" id="MF_01940"/>
    </source>
</evidence>
<comment type="function">
    <text evidence="1">Hydrolyzes RNA 2',3'-cyclic phosphodiester to an RNA 2'-phosphomonoester.</text>
</comment>
<comment type="catalytic activity">
    <reaction evidence="1">
        <text>a 3'-end 2',3'-cyclophospho-ribonucleotide-RNA + H2O = a 3'-end 2'-phospho-ribonucleotide-RNA + H(+)</text>
        <dbReference type="Rhea" id="RHEA:11828"/>
        <dbReference type="Rhea" id="RHEA-COMP:10464"/>
        <dbReference type="Rhea" id="RHEA-COMP:17353"/>
        <dbReference type="ChEBI" id="CHEBI:15377"/>
        <dbReference type="ChEBI" id="CHEBI:15378"/>
        <dbReference type="ChEBI" id="CHEBI:83064"/>
        <dbReference type="ChEBI" id="CHEBI:173113"/>
        <dbReference type="EC" id="3.1.4.58"/>
    </reaction>
</comment>
<comment type="similarity">
    <text evidence="1">Belongs to the 2H phosphoesterase superfamily. ThpR family.</text>
</comment>
<keyword id="KW-0378">Hydrolase</keyword>
<keyword id="KW-1185">Reference proteome</keyword>
<name>THPR_METJA</name>
<reference key="1">
    <citation type="journal article" date="1996" name="Science">
        <title>Complete genome sequence of the methanogenic archaeon, Methanococcus jannaschii.</title>
        <authorList>
            <person name="Bult C.J."/>
            <person name="White O."/>
            <person name="Olsen G.J."/>
            <person name="Zhou L."/>
            <person name="Fleischmann R.D."/>
            <person name="Sutton G.G."/>
            <person name="Blake J.A."/>
            <person name="FitzGerald L.M."/>
            <person name="Clayton R.A."/>
            <person name="Gocayne J.D."/>
            <person name="Kerlavage A.R."/>
            <person name="Dougherty B.A."/>
            <person name="Tomb J.-F."/>
            <person name="Adams M.D."/>
            <person name="Reich C.I."/>
            <person name="Overbeek R."/>
            <person name="Kirkness E.F."/>
            <person name="Weinstock K.G."/>
            <person name="Merrick J.M."/>
            <person name="Glodek A."/>
            <person name="Scott J.L."/>
            <person name="Geoghagen N.S.M."/>
            <person name="Weidman J.F."/>
            <person name="Fuhrmann J.L."/>
            <person name="Nguyen D."/>
            <person name="Utterback T.R."/>
            <person name="Kelley J.M."/>
            <person name="Peterson J.D."/>
            <person name="Sadow P.W."/>
            <person name="Hanna M.C."/>
            <person name="Cotton M.D."/>
            <person name="Roberts K.M."/>
            <person name="Hurst M.A."/>
            <person name="Kaine B.P."/>
            <person name="Borodovsky M."/>
            <person name="Klenk H.-P."/>
            <person name="Fraser C.M."/>
            <person name="Smith H.O."/>
            <person name="Woese C.R."/>
            <person name="Venter J.C."/>
        </authorList>
    </citation>
    <scope>NUCLEOTIDE SEQUENCE [LARGE SCALE GENOMIC DNA]</scope>
    <source>
        <strain>ATCC 43067 / DSM 2661 / JAL-1 / JCM 10045 / NBRC 100440</strain>
    </source>
</reference>
<accession>Q58963</accession>
<feature type="chain" id="PRO_0000138963" description="RNA 2',3'-cyclic phosphodiesterase">
    <location>
        <begin position="1"/>
        <end position="173"/>
    </location>
</feature>
<feature type="short sequence motif" description="HXTX 1" evidence="1">
    <location>
        <begin position="38"/>
        <end position="41"/>
    </location>
</feature>
<feature type="short sequence motif" description="HXTX 2" evidence="1">
    <location>
        <begin position="118"/>
        <end position="121"/>
    </location>
</feature>
<feature type="active site" description="Proton donor" evidence="1">
    <location>
        <position position="38"/>
    </location>
</feature>
<feature type="active site" description="Proton acceptor" evidence="1">
    <location>
        <position position="118"/>
    </location>
</feature>
<sequence>MRLFLAIDIPENIKEEIAKFQEQFKMKGIKLVEKENLHITVKFLGEVDEEKLKEILNLDLSIQPIKIKLKYIGTFPNSNYIRVIWIGAYNNNLVEIFKEIDEKLSNLGFKKEREYVPHLTIGRVKFIDNKKKLKDRIEKYKDVDFGEFEAKHIKLYKSTLTPNGPIYEVIKEW</sequence>
<dbReference type="EC" id="3.1.4.58" evidence="1"/>
<dbReference type="EMBL" id="L77117">
    <property type="protein sequence ID" value="AAB99586.1"/>
    <property type="molecule type" value="Genomic_DNA"/>
</dbReference>
<dbReference type="PIR" id="G64495">
    <property type="entry name" value="G64495"/>
</dbReference>
<dbReference type="RefSeq" id="WP_010871092.1">
    <property type="nucleotide sequence ID" value="NC_000909.1"/>
</dbReference>
<dbReference type="SMR" id="Q58963"/>
<dbReference type="FunCoup" id="Q58963">
    <property type="interactions" value="2"/>
</dbReference>
<dbReference type="STRING" id="243232.MJ_1568"/>
<dbReference type="PaxDb" id="243232-MJ_1568"/>
<dbReference type="EnsemblBacteria" id="AAB99586">
    <property type="protein sequence ID" value="AAB99586"/>
    <property type="gene ID" value="MJ_1568"/>
</dbReference>
<dbReference type="GeneID" id="1452476"/>
<dbReference type="KEGG" id="mja:MJ_1568"/>
<dbReference type="eggNOG" id="arCOG01736">
    <property type="taxonomic scope" value="Archaea"/>
</dbReference>
<dbReference type="HOGENOM" id="CLU_081251_3_4_2"/>
<dbReference type="InParanoid" id="Q58963"/>
<dbReference type="OrthoDB" id="44091at2157"/>
<dbReference type="PhylomeDB" id="Q58963"/>
<dbReference type="Proteomes" id="UP000000805">
    <property type="component" value="Chromosome"/>
</dbReference>
<dbReference type="GO" id="GO:0005829">
    <property type="term" value="C:cytosol"/>
    <property type="evidence" value="ECO:0000318"/>
    <property type="project" value="GO_Central"/>
</dbReference>
<dbReference type="GO" id="GO:0004113">
    <property type="term" value="F:2',3'-cyclic-nucleotide 3'-phosphodiesterase activity"/>
    <property type="evidence" value="ECO:0007669"/>
    <property type="project" value="InterPro"/>
</dbReference>
<dbReference type="GO" id="GO:0034237">
    <property type="term" value="F:protein kinase A regulatory subunit binding"/>
    <property type="evidence" value="ECO:0000318"/>
    <property type="project" value="GO_Central"/>
</dbReference>
<dbReference type="GO" id="GO:0008664">
    <property type="term" value="F:RNA 2',3'-cyclic 3'-phosphodiesterase activity"/>
    <property type="evidence" value="ECO:0007669"/>
    <property type="project" value="UniProtKB-EC"/>
</dbReference>
<dbReference type="FunFam" id="3.90.1140.10:FF:000009">
    <property type="entry name" value="RNA 2',3'-cyclic phosphodiesterase"/>
    <property type="match status" value="1"/>
</dbReference>
<dbReference type="Gene3D" id="3.90.1140.10">
    <property type="entry name" value="Cyclic phosphodiesterase"/>
    <property type="match status" value="1"/>
</dbReference>
<dbReference type="HAMAP" id="MF_01940">
    <property type="entry name" value="RNA_CPDase"/>
    <property type="match status" value="1"/>
</dbReference>
<dbReference type="InterPro" id="IPR009097">
    <property type="entry name" value="Cyclic_Pdiesterase"/>
</dbReference>
<dbReference type="InterPro" id="IPR014051">
    <property type="entry name" value="Phosphoesterase_HXTX"/>
</dbReference>
<dbReference type="InterPro" id="IPR004175">
    <property type="entry name" value="RNA_CPDase"/>
</dbReference>
<dbReference type="NCBIfam" id="TIGR02258">
    <property type="entry name" value="2_5_ligase"/>
    <property type="match status" value="1"/>
</dbReference>
<dbReference type="PANTHER" id="PTHR35561">
    <property type="entry name" value="RNA 2',3'-CYCLIC PHOSPHODIESTERASE"/>
    <property type="match status" value="1"/>
</dbReference>
<dbReference type="PANTHER" id="PTHR35561:SF1">
    <property type="entry name" value="RNA 2',3'-CYCLIC PHOSPHODIESTERASE"/>
    <property type="match status" value="1"/>
</dbReference>
<dbReference type="Pfam" id="PF02834">
    <property type="entry name" value="LigT_PEase"/>
    <property type="match status" value="2"/>
</dbReference>
<dbReference type="SUPFAM" id="SSF55144">
    <property type="entry name" value="LigT-like"/>
    <property type="match status" value="1"/>
</dbReference>